<sequence length="236" mass="26388">MYQLGDVKKIVLPGDPVEVQGKIRNGIYRGPDNKYYSEYFGTLQVSDQYVDVVPFSGQYIPRKGDKVIGKIIEVGPSTWTVDINSPYFAMLHMNDTPWRISSGDLKRYLNSGDYVYAKIMSVNEIKESWLTLKEPGLKKLEGGHMVLIHASRVPRVIGKGGGMVNMVKELTSTRIIIGQNGLIWIDGPIEGVTMAIAAIEMIEREAHTEGLTVRVESFLKELRGDKDGNQQDKANQ</sequence>
<protein>
    <recommendedName>
        <fullName evidence="1">Exosome complex component Rrp4</fullName>
    </recommendedName>
</protein>
<evidence type="ECO:0000255" key="1">
    <source>
        <dbReference type="HAMAP-Rule" id="MF_00623"/>
    </source>
</evidence>
<proteinExistence type="inferred from homology"/>
<accession>Q97BZ6</accession>
<keyword id="KW-0963">Cytoplasm</keyword>
<keyword id="KW-0271">Exosome</keyword>
<keyword id="KW-0694">RNA-binding</keyword>
<reference key="1">
    <citation type="journal article" date="2000" name="Proc. Natl. Acad. Sci. U.S.A.">
        <title>Archaeal adaptation to higher temperatures revealed by genomic sequence of Thermoplasma volcanium.</title>
        <authorList>
            <person name="Kawashima T."/>
            <person name="Amano N."/>
            <person name="Koike H."/>
            <person name="Makino S."/>
            <person name="Higuchi S."/>
            <person name="Kawashima-Ohya Y."/>
            <person name="Watanabe K."/>
            <person name="Yamazaki M."/>
            <person name="Kanehori K."/>
            <person name="Kawamoto T."/>
            <person name="Nunoshiba T."/>
            <person name="Yamamoto Y."/>
            <person name="Aramaki H."/>
            <person name="Makino K."/>
            <person name="Suzuki M."/>
        </authorList>
    </citation>
    <scope>NUCLEOTIDE SEQUENCE [LARGE SCALE GENOMIC DNA]</scope>
    <source>
        <strain>ATCC 51530 / DSM 4299 / JCM 9571 / NBRC 15438 / GSS1</strain>
    </source>
</reference>
<feature type="chain" id="PRO_0000050159" description="Exosome complex component Rrp4">
    <location>
        <begin position="1"/>
        <end position="236"/>
    </location>
</feature>
<feature type="domain" description="S1 motif" evidence="1">
    <location>
        <begin position="64"/>
        <end position="133"/>
    </location>
</feature>
<feature type="domain" description="KH" evidence="1">
    <location>
        <begin position="141"/>
        <end position="199"/>
    </location>
</feature>
<gene>
    <name evidence="1" type="primary">rrp4</name>
    <name type="ordered locus">TV0309</name>
    <name type="ORF">TVG0319243</name>
</gene>
<organism>
    <name type="scientific">Thermoplasma volcanium (strain ATCC 51530 / DSM 4299 / JCM 9571 / NBRC 15438 / GSS1)</name>
    <dbReference type="NCBI Taxonomy" id="273116"/>
    <lineage>
        <taxon>Archaea</taxon>
        <taxon>Methanobacteriati</taxon>
        <taxon>Thermoplasmatota</taxon>
        <taxon>Thermoplasmata</taxon>
        <taxon>Thermoplasmatales</taxon>
        <taxon>Thermoplasmataceae</taxon>
        <taxon>Thermoplasma</taxon>
    </lineage>
</organism>
<comment type="function">
    <text evidence="1">Non-catalytic component of the exosome, which is a complex involved in RNA degradation. Increases the RNA binding and the efficiency of RNA degradation. Confers strong poly(A) specificity to the exosome.</text>
</comment>
<comment type="subunit">
    <text evidence="1">Component of the archaeal exosome complex. Forms a trimer of Rrp4 and/or Csl4 subunits. The trimer associates with a hexameric ring-like arrangement composed of 3 Rrp41-Rrp42 heterodimers.</text>
</comment>
<comment type="subcellular location">
    <subcellularLocation>
        <location evidence="1">Cytoplasm</location>
    </subcellularLocation>
</comment>
<comment type="similarity">
    <text evidence="1">Belongs to the RRP4 family.</text>
</comment>
<name>RRP4_THEVO</name>
<dbReference type="EMBL" id="BA000011">
    <property type="protein sequence ID" value="BAB59451.1"/>
    <property type="molecule type" value="Genomic_DNA"/>
</dbReference>
<dbReference type="RefSeq" id="WP_010916564.1">
    <property type="nucleotide sequence ID" value="NC_002689.2"/>
</dbReference>
<dbReference type="SMR" id="Q97BZ6"/>
<dbReference type="STRING" id="273116.gene:9381084"/>
<dbReference type="PaxDb" id="273116-14324524"/>
<dbReference type="GeneID" id="1440822"/>
<dbReference type="KEGG" id="tvo:TVG0319243"/>
<dbReference type="eggNOG" id="arCOG00678">
    <property type="taxonomic scope" value="Archaea"/>
</dbReference>
<dbReference type="HOGENOM" id="CLU_071769_0_0_2"/>
<dbReference type="OrthoDB" id="35160at2157"/>
<dbReference type="PhylomeDB" id="Q97BZ6"/>
<dbReference type="Proteomes" id="UP000001017">
    <property type="component" value="Chromosome"/>
</dbReference>
<dbReference type="GO" id="GO:0005737">
    <property type="term" value="C:cytoplasm"/>
    <property type="evidence" value="ECO:0007669"/>
    <property type="project" value="UniProtKB-SubCell"/>
</dbReference>
<dbReference type="GO" id="GO:0000178">
    <property type="term" value="C:exosome (RNase complex)"/>
    <property type="evidence" value="ECO:0007669"/>
    <property type="project" value="UniProtKB-KW"/>
</dbReference>
<dbReference type="GO" id="GO:0008143">
    <property type="term" value="F:poly(A) binding"/>
    <property type="evidence" value="ECO:0007669"/>
    <property type="project" value="InterPro"/>
</dbReference>
<dbReference type="GO" id="GO:0071034">
    <property type="term" value="P:CUT catabolic process"/>
    <property type="evidence" value="ECO:0007669"/>
    <property type="project" value="TreeGrafter"/>
</dbReference>
<dbReference type="GO" id="GO:0000467">
    <property type="term" value="P:exonucleolytic trimming to generate mature 3'-end of 5.8S rRNA from tricistronic rRNA transcript (SSU-rRNA, 5.8S rRNA, LSU-rRNA)"/>
    <property type="evidence" value="ECO:0007669"/>
    <property type="project" value="TreeGrafter"/>
</dbReference>
<dbReference type="GO" id="GO:0071051">
    <property type="term" value="P:poly(A)-dependent snoRNA 3'-end processing"/>
    <property type="evidence" value="ECO:0007669"/>
    <property type="project" value="TreeGrafter"/>
</dbReference>
<dbReference type="GO" id="GO:0006401">
    <property type="term" value="P:RNA catabolic process"/>
    <property type="evidence" value="ECO:0007669"/>
    <property type="project" value="UniProtKB-UniRule"/>
</dbReference>
<dbReference type="GO" id="GO:0034475">
    <property type="term" value="P:U4 snRNA 3'-end processing"/>
    <property type="evidence" value="ECO:0007669"/>
    <property type="project" value="TreeGrafter"/>
</dbReference>
<dbReference type="CDD" id="cd22524">
    <property type="entry name" value="KH-I_Rrp4_prokar"/>
    <property type="match status" value="1"/>
</dbReference>
<dbReference type="CDD" id="cd05789">
    <property type="entry name" value="S1_Rrp4"/>
    <property type="match status" value="1"/>
</dbReference>
<dbReference type="Gene3D" id="2.40.50.100">
    <property type="match status" value="1"/>
</dbReference>
<dbReference type="Gene3D" id="3.30.1370.10">
    <property type="entry name" value="K Homology domain, type 1"/>
    <property type="match status" value="1"/>
</dbReference>
<dbReference type="Gene3D" id="2.40.50.140">
    <property type="entry name" value="Nucleic acid-binding proteins"/>
    <property type="match status" value="1"/>
</dbReference>
<dbReference type="HAMAP" id="MF_00623">
    <property type="entry name" value="Exosome_Rrp4"/>
    <property type="match status" value="1"/>
</dbReference>
<dbReference type="InterPro" id="IPR026699">
    <property type="entry name" value="Exosome_RNA_bind1/RRP40/RRP4"/>
</dbReference>
<dbReference type="InterPro" id="IPR004087">
    <property type="entry name" value="KH_dom"/>
</dbReference>
<dbReference type="InterPro" id="IPR004088">
    <property type="entry name" value="KH_dom_type_1"/>
</dbReference>
<dbReference type="InterPro" id="IPR036612">
    <property type="entry name" value="KH_dom_type_1_sf"/>
</dbReference>
<dbReference type="InterPro" id="IPR012340">
    <property type="entry name" value="NA-bd_OB-fold"/>
</dbReference>
<dbReference type="InterPro" id="IPR023474">
    <property type="entry name" value="Rrp4"/>
</dbReference>
<dbReference type="InterPro" id="IPR048565">
    <property type="entry name" value="RRP4_S1"/>
</dbReference>
<dbReference type="InterPro" id="IPR003029">
    <property type="entry name" value="S1_domain"/>
</dbReference>
<dbReference type="NCBIfam" id="NF003181">
    <property type="entry name" value="PRK04163.1-1"/>
    <property type="match status" value="1"/>
</dbReference>
<dbReference type="PANTHER" id="PTHR21321:SF4">
    <property type="entry name" value="EXOSOME COMPLEX COMPONENT RRP4"/>
    <property type="match status" value="1"/>
</dbReference>
<dbReference type="PANTHER" id="PTHR21321">
    <property type="entry name" value="PNAS-3 RELATED"/>
    <property type="match status" value="1"/>
</dbReference>
<dbReference type="Pfam" id="PF00013">
    <property type="entry name" value="KH_1"/>
    <property type="match status" value="1"/>
</dbReference>
<dbReference type="Pfam" id="PF21266">
    <property type="entry name" value="RRP4_S1"/>
    <property type="match status" value="1"/>
</dbReference>
<dbReference type="SMART" id="SM00322">
    <property type="entry name" value="KH"/>
    <property type="match status" value="1"/>
</dbReference>
<dbReference type="SUPFAM" id="SSF54791">
    <property type="entry name" value="Eukaryotic type KH-domain (KH-domain type I)"/>
    <property type="match status" value="1"/>
</dbReference>
<dbReference type="SUPFAM" id="SSF50249">
    <property type="entry name" value="Nucleic acid-binding proteins"/>
    <property type="match status" value="1"/>
</dbReference>
<dbReference type="SUPFAM" id="SSF110324">
    <property type="entry name" value="Ribosomal L27 protein-like"/>
    <property type="match status" value="1"/>
</dbReference>
<dbReference type="PROSITE" id="PS50084">
    <property type="entry name" value="KH_TYPE_1"/>
    <property type="match status" value="1"/>
</dbReference>
<dbReference type="PROSITE" id="PS50126">
    <property type="entry name" value="S1"/>
    <property type="match status" value="1"/>
</dbReference>